<sequence>MARYVFITGGVVSSLGKGIAAAALGALLQARGYRVRLRKLDPYLNVDPGTMSPTQHGEVFVTDDGAETDLDLGHYERFTGRSATKTDNITTGRIYKNIIDKERRGDYLGATVQVIPHVTNEIKNFVTEGNEDYDFVICEIGGTVGDIEAMPFMEAIRQLGNDLPRGTAVYVHLTLMPYIPAAGELKTKPTQHSVKELQALGIHPDILLVRADREIPEAERRKLSLFCNVRQSAVIQALDVASIYDVPIAYHKEGLDNEVLAAFGIEPAPKPRMEAWEDVAHRIRTPEGEVTIAIVGKYTGLKDAYKSLIEALYHGGIANRVKVKLEWIESEVFEKEDPAPYLEKVHGILVPGGFGERGSEGKINAARFARERKVPYFGICFGMQMAVVEAARNLAGIEKASSTEFGPTKEPVVGLMTEWVKGNELEKRSAAGDLGGTMRLGAYRAALKPDTKIAGIYGSPDISERHRHRYEVNVDYKSRLESCGLVFSGMSPDGVLPETIEYPDHPWFIGVQYHPELKSRPLDPHPLFSSFIEAALEQSRLV</sequence>
<evidence type="ECO:0000255" key="1">
    <source>
        <dbReference type="HAMAP-Rule" id="MF_01227"/>
    </source>
</evidence>
<comment type="function">
    <text evidence="1">Catalyzes the ATP-dependent amination of UTP to CTP with either L-glutamine or ammonia as the source of nitrogen. Regulates intracellular CTP levels through interactions with the four ribonucleotide triphosphates.</text>
</comment>
<comment type="catalytic activity">
    <reaction evidence="1">
        <text>UTP + L-glutamine + ATP + H2O = CTP + L-glutamate + ADP + phosphate + 2 H(+)</text>
        <dbReference type="Rhea" id="RHEA:26426"/>
        <dbReference type="ChEBI" id="CHEBI:15377"/>
        <dbReference type="ChEBI" id="CHEBI:15378"/>
        <dbReference type="ChEBI" id="CHEBI:29985"/>
        <dbReference type="ChEBI" id="CHEBI:30616"/>
        <dbReference type="ChEBI" id="CHEBI:37563"/>
        <dbReference type="ChEBI" id="CHEBI:43474"/>
        <dbReference type="ChEBI" id="CHEBI:46398"/>
        <dbReference type="ChEBI" id="CHEBI:58359"/>
        <dbReference type="ChEBI" id="CHEBI:456216"/>
        <dbReference type="EC" id="6.3.4.2"/>
    </reaction>
</comment>
<comment type="catalytic activity">
    <reaction evidence="1">
        <text>L-glutamine + H2O = L-glutamate + NH4(+)</text>
        <dbReference type="Rhea" id="RHEA:15889"/>
        <dbReference type="ChEBI" id="CHEBI:15377"/>
        <dbReference type="ChEBI" id="CHEBI:28938"/>
        <dbReference type="ChEBI" id="CHEBI:29985"/>
        <dbReference type="ChEBI" id="CHEBI:58359"/>
    </reaction>
</comment>
<comment type="catalytic activity">
    <reaction evidence="1">
        <text>UTP + NH4(+) + ATP = CTP + ADP + phosphate + 2 H(+)</text>
        <dbReference type="Rhea" id="RHEA:16597"/>
        <dbReference type="ChEBI" id="CHEBI:15378"/>
        <dbReference type="ChEBI" id="CHEBI:28938"/>
        <dbReference type="ChEBI" id="CHEBI:30616"/>
        <dbReference type="ChEBI" id="CHEBI:37563"/>
        <dbReference type="ChEBI" id="CHEBI:43474"/>
        <dbReference type="ChEBI" id="CHEBI:46398"/>
        <dbReference type="ChEBI" id="CHEBI:456216"/>
    </reaction>
</comment>
<comment type="activity regulation">
    <text evidence="1">Allosterically activated by GTP, when glutamine is the substrate; GTP has no effect on the reaction when ammonia is the substrate. The allosteric effector GTP functions by stabilizing the protein conformation that binds the tetrahedral intermediate(s) formed during glutamine hydrolysis. Inhibited by the product CTP, via allosteric rather than competitive inhibition.</text>
</comment>
<comment type="pathway">
    <text evidence="1">Pyrimidine metabolism; CTP biosynthesis via de novo pathway; CTP from UDP: step 2/2.</text>
</comment>
<comment type="subunit">
    <text evidence="1">Homotetramer.</text>
</comment>
<comment type="miscellaneous">
    <text evidence="1">CTPSs have evolved a hybrid strategy for distinguishing between UTP and CTP. The overlapping regions of the product feedback inhibitory and substrate sites recognize a common feature in both compounds, the triphosphate moiety. To differentiate isosteric substrate and product pyrimidine rings, an additional pocket far from the expected kinase/ligase catalytic site, specifically recognizes the cytosine and ribose portions of the product inhibitor.</text>
</comment>
<comment type="similarity">
    <text evidence="1">Belongs to the CTP synthase family.</text>
</comment>
<reference key="1">
    <citation type="journal article" date="2001" name="Proc. Natl. Acad. Sci. U.S.A.">
        <title>Analysis of the chromosome sequence of the legume symbiont Sinorhizobium meliloti strain 1021.</title>
        <authorList>
            <person name="Capela D."/>
            <person name="Barloy-Hubler F."/>
            <person name="Gouzy J."/>
            <person name="Bothe G."/>
            <person name="Ampe F."/>
            <person name="Batut J."/>
            <person name="Boistard P."/>
            <person name="Becker A."/>
            <person name="Boutry M."/>
            <person name="Cadieu E."/>
            <person name="Dreano S."/>
            <person name="Gloux S."/>
            <person name="Godrie T."/>
            <person name="Goffeau A."/>
            <person name="Kahn D."/>
            <person name="Kiss E."/>
            <person name="Lelaure V."/>
            <person name="Masuy D."/>
            <person name="Pohl T."/>
            <person name="Portetelle D."/>
            <person name="Puehler A."/>
            <person name="Purnelle B."/>
            <person name="Ramsperger U."/>
            <person name="Renard C."/>
            <person name="Thebault P."/>
            <person name="Vandenbol M."/>
            <person name="Weidner S."/>
            <person name="Galibert F."/>
        </authorList>
    </citation>
    <scope>NUCLEOTIDE SEQUENCE [LARGE SCALE GENOMIC DNA]</scope>
    <source>
        <strain>1021</strain>
    </source>
</reference>
<reference key="2">
    <citation type="journal article" date="2001" name="Science">
        <title>The composite genome of the legume symbiont Sinorhizobium meliloti.</title>
        <authorList>
            <person name="Galibert F."/>
            <person name="Finan T.M."/>
            <person name="Long S.R."/>
            <person name="Puehler A."/>
            <person name="Abola P."/>
            <person name="Ampe F."/>
            <person name="Barloy-Hubler F."/>
            <person name="Barnett M.J."/>
            <person name="Becker A."/>
            <person name="Boistard P."/>
            <person name="Bothe G."/>
            <person name="Boutry M."/>
            <person name="Bowser L."/>
            <person name="Buhrmester J."/>
            <person name="Cadieu E."/>
            <person name="Capela D."/>
            <person name="Chain P."/>
            <person name="Cowie A."/>
            <person name="Davis R.W."/>
            <person name="Dreano S."/>
            <person name="Federspiel N.A."/>
            <person name="Fisher R.F."/>
            <person name="Gloux S."/>
            <person name="Godrie T."/>
            <person name="Goffeau A."/>
            <person name="Golding B."/>
            <person name="Gouzy J."/>
            <person name="Gurjal M."/>
            <person name="Hernandez-Lucas I."/>
            <person name="Hong A."/>
            <person name="Huizar L."/>
            <person name="Hyman R.W."/>
            <person name="Jones T."/>
            <person name="Kahn D."/>
            <person name="Kahn M.L."/>
            <person name="Kalman S."/>
            <person name="Keating D.H."/>
            <person name="Kiss E."/>
            <person name="Komp C."/>
            <person name="Lelaure V."/>
            <person name="Masuy D."/>
            <person name="Palm C."/>
            <person name="Peck M.C."/>
            <person name="Pohl T.M."/>
            <person name="Portetelle D."/>
            <person name="Purnelle B."/>
            <person name="Ramsperger U."/>
            <person name="Surzycki R."/>
            <person name="Thebault P."/>
            <person name="Vandenbol M."/>
            <person name="Vorhoelter F.J."/>
            <person name="Weidner S."/>
            <person name="Wells D.H."/>
            <person name="Wong K."/>
            <person name="Yeh K.-C."/>
            <person name="Batut J."/>
        </authorList>
    </citation>
    <scope>NUCLEOTIDE SEQUENCE [LARGE SCALE GENOMIC DNA]</scope>
    <source>
        <strain>1021</strain>
    </source>
</reference>
<name>PYRG_RHIME</name>
<protein>
    <recommendedName>
        <fullName evidence="1">CTP synthase</fullName>
        <ecNumber evidence="1">6.3.4.2</ecNumber>
    </recommendedName>
    <alternativeName>
        <fullName evidence="1">Cytidine 5'-triphosphate synthase</fullName>
    </alternativeName>
    <alternativeName>
        <fullName evidence="1">Cytidine triphosphate synthetase</fullName>
        <shortName evidence="1">CTP synthetase</shortName>
        <shortName evidence="1">CTPS</shortName>
    </alternativeName>
    <alternativeName>
        <fullName evidence="1">UTP--ammonia ligase</fullName>
    </alternativeName>
</protein>
<dbReference type="EC" id="6.3.4.2" evidence="1"/>
<dbReference type="EMBL" id="AL591688">
    <property type="protein sequence ID" value="CAC46019.1"/>
    <property type="molecule type" value="Genomic_DNA"/>
</dbReference>
<dbReference type="RefSeq" id="NP_385546.1">
    <property type="nucleotide sequence ID" value="NC_003047.1"/>
</dbReference>
<dbReference type="SMR" id="Q92QA0"/>
<dbReference type="EnsemblBacteria" id="CAC46019">
    <property type="protein sequence ID" value="CAC46019"/>
    <property type="gene ID" value="SMc01025"/>
</dbReference>
<dbReference type="KEGG" id="sme:SMc01025"/>
<dbReference type="PATRIC" id="fig|266834.11.peg.2860"/>
<dbReference type="eggNOG" id="COG0504">
    <property type="taxonomic scope" value="Bacteria"/>
</dbReference>
<dbReference type="HOGENOM" id="CLU_011675_5_0_5"/>
<dbReference type="OrthoDB" id="9801107at2"/>
<dbReference type="UniPathway" id="UPA00159">
    <property type="reaction ID" value="UER00277"/>
</dbReference>
<dbReference type="Proteomes" id="UP000001976">
    <property type="component" value="Chromosome"/>
</dbReference>
<dbReference type="GO" id="GO:0005829">
    <property type="term" value="C:cytosol"/>
    <property type="evidence" value="ECO:0007669"/>
    <property type="project" value="TreeGrafter"/>
</dbReference>
<dbReference type="GO" id="GO:0005524">
    <property type="term" value="F:ATP binding"/>
    <property type="evidence" value="ECO:0007669"/>
    <property type="project" value="UniProtKB-KW"/>
</dbReference>
<dbReference type="GO" id="GO:0003883">
    <property type="term" value="F:CTP synthase activity"/>
    <property type="evidence" value="ECO:0007669"/>
    <property type="project" value="UniProtKB-UniRule"/>
</dbReference>
<dbReference type="GO" id="GO:0004359">
    <property type="term" value="F:glutaminase activity"/>
    <property type="evidence" value="ECO:0007669"/>
    <property type="project" value="RHEA"/>
</dbReference>
<dbReference type="GO" id="GO:0042802">
    <property type="term" value="F:identical protein binding"/>
    <property type="evidence" value="ECO:0007669"/>
    <property type="project" value="TreeGrafter"/>
</dbReference>
<dbReference type="GO" id="GO:0046872">
    <property type="term" value="F:metal ion binding"/>
    <property type="evidence" value="ECO:0007669"/>
    <property type="project" value="UniProtKB-KW"/>
</dbReference>
<dbReference type="GO" id="GO:0044210">
    <property type="term" value="P:'de novo' CTP biosynthetic process"/>
    <property type="evidence" value="ECO:0007669"/>
    <property type="project" value="UniProtKB-UniRule"/>
</dbReference>
<dbReference type="GO" id="GO:0019856">
    <property type="term" value="P:pyrimidine nucleobase biosynthetic process"/>
    <property type="evidence" value="ECO:0007669"/>
    <property type="project" value="TreeGrafter"/>
</dbReference>
<dbReference type="CDD" id="cd03113">
    <property type="entry name" value="CTPS_N"/>
    <property type="match status" value="1"/>
</dbReference>
<dbReference type="CDD" id="cd01746">
    <property type="entry name" value="GATase1_CTP_Synthase"/>
    <property type="match status" value="1"/>
</dbReference>
<dbReference type="FunFam" id="3.40.50.300:FF:000009">
    <property type="entry name" value="CTP synthase"/>
    <property type="match status" value="1"/>
</dbReference>
<dbReference type="FunFam" id="3.40.50.880:FF:000002">
    <property type="entry name" value="CTP synthase"/>
    <property type="match status" value="1"/>
</dbReference>
<dbReference type="Gene3D" id="3.40.50.880">
    <property type="match status" value="1"/>
</dbReference>
<dbReference type="Gene3D" id="3.40.50.300">
    <property type="entry name" value="P-loop containing nucleotide triphosphate hydrolases"/>
    <property type="match status" value="1"/>
</dbReference>
<dbReference type="HAMAP" id="MF_01227">
    <property type="entry name" value="PyrG"/>
    <property type="match status" value="1"/>
</dbReference>
<dbReference type="InterPro" id="IPR029062">
    <property type="entry name" value="Class_I_gatase-like"/>
</dbReference>
<dbReference type="InterPro" id="IPR004468">
    <property type="entry name" value="CTP_synthase"/>
</dbReference>
<dbReference type="InterPro" id="IPR017456">
    <property type="entry name" value="CTP_synthase_N"/>
</dbReference>
<dbReference type="InterPro" id="IPR017926">
    <property type="entry name" value="GATASE"/>
</dbReference>
<dbReference type="InterPro" id="IPR033828">
    <property type="entry name" value="GATase1_CTP_Synthase"/>
</dbReference>
<dbReference type="InterPro" id="IPR027417">
    <property type="entry name" value="P-loop_NTPase"/>
</dbReference>
<dbReference type="NCBIfam" id="NF003792">
    <property type="entry name" value="PRK05380.1"/>
    <property type="match status" value="1"/>
</dbReference>
<dbReference type="NCBIfam" id="TIGR00337">
    <property type="entry name" value="PyrG"/>
    <property type="match status" value="1"/>
</dbReference>
<dbReference type="PANTHER" id="PTHR11550">
    <property type="entry name" value="CTP SYNTHASE"/>
    <property type="match status" value="1"/>
</dbReference>
<dbReference type="PANTHER" id="PTHR11550:SF0">
    <property type="entry name" value="CTP SYNTHASE-RELATED"/>
    <property type="match status" value="1"/>
</dbReference>
<dbReference type="Pfam" id="PF06418">
    <property type="entry name" value="CTP_synth_N"/>
    <property type="match status" value="1"/>
</dbReference>
<dbReference type="Pfam" id="PF00117">
    <property type="entry name" value="GATase"/>
    <property type="match status" value="1"/>
</dbReference>
<dbReference type="SUPFAM" id="SSF52317">
    <property type="entry name" value="Class I glutamine amidotransferase-like"/>
    <property type="match status" value="1"/>
</dbReference>
<dbReference type="SUPFAM" id="SSF52540">
    <property type="entry name" value="P-loop containing nucleoside triphosphate hydrolases"/>
    <property type="match status" value="1"/>
</dbReference>
<dbReference type="PROSITE" id="PS51273">
    <property type="entry name" value="GATASE_TYPE_1"/>
    <property type="match status" value="1"/>
</dbReference>
<organism>
    <name type="scientific">Rhizobium meliloti (strain 1021)</name>
    <name type="common">Ensifer meliloti</name>
    <name type="synonym">Sinorhizobium meliloti</name>
    <dbReference type="NCBI Taxonomy" id="266834"/>
    <lineage>
        <taxon>Bacteria</taxon>
        <taxon>Pseudomonadati</taxon>
        <taxon>Pseudomonadota</taxon>
        <taxon>Alphaproteobacteria</taxon>
        <taxon>Hyphomicrobiales</taxon>
        <taxon>Rhizobiaceae</taxon>
        <taxon>Sinorhizobium/Ensifer group</taxon>
        <taxon>Sinorhizobium</taxon>
    </lineage>
</organism>
<keyword id="KW-0067">ATP-binding</keyword>
<keyword id="KW-0315">Glutamine amidotransferase</keyword>
<keyword id="KW-0436">Ligase</keyword>
<keyword id="KW-0460">Magnesium</keyword>
<keyword id="KW-0479">Metal-binding</keyword>
<keyword id="KW-0547">Nucleotide-binding</keyword>
<keyword id="KW-0665">Pyrimidine biosynthesis</keyword>
<keyword id="KW-1185">Reference proteome</keyword>
<gene>
    <name evidence="1" type="primary">pyrG</name>
    <name type="ordered locus">R01440</name>
    <name type="ORF">SMc01025</name>
</gene>
<proteinExistence type="inferred from homology"/>
<accession>Q92QA0</accession>
<feature type="chain" id="PRO_0000138215" description="CTP synthase">
    <location>
        <begin position="1"/>
        <end position="542"/>
    </location>
</feature>
<feature type="domain" description="Glutamine amidotransferase type-1" evidence="1">
    <location>
        <begin position="291"/>
        <end position="541"/>
    </location>
</feature>
<feature type="region of interest" description="Amidoligase domain" evidence="1">
    <location>
        <begin position="1"/>
        <end position="265"/>
    </location>
</feature>
<feature type="active site" description="Nucleophile; for glutamine hydrolysis" evidence="1">
    <location>
        <position position="380"/>
    </location>
</feature>
<feature type="active site" evidence="1">
    <location>
        <position position="514"/>
    </location>
</feature>
<feature type="active site" evidence="1">
    <location>
        <position position="516"/>
    </location>
</feature>
<feature type="binding site" evidence="1">
    <location>
        <position position="13"/>
    </location>
    <ligand>
        <name>CTP</name>
        <dbReference type="ChEBI" id="CHEBI:37563"/>
        <note>allosteric inhibitor</note>
    </ligand>
</feature>
<feature type="binding site" evidence="1">
    <location>
        <position position="13"/>
    </location>
    <ligand>
        <name>UTP</name>
        <dbReference type="ChEBI" id="CHEBI:46398"/>
    </ligand>
</feature>
<feature type="binding site" evidence="1">
    <location>
        <begin position="14"/>
        <end position="19"/>
    </location>
    <ligand>
        <name>ATP</name>
        <dbReference type="ChEBI" id="CHEBI:30616"/>
    </ligand>
</feature>
<feature type="binding site" evidence="1">
    <location>
        <position position="71"/>
    </location>
    <ligand>
        <name>ATP</name>
        <dbReference type="ChEBI" id="CHEBI:30616"/>
    </ligand>
</feature>
<feature type="binding site" evidence="1">
    <location>
        <position position="71"/>
    </location>
    <ligand>
        <name>Mg(2+)</name>
        <dbReference type="ChEBI" id="CHEBI:18420"/>
    </ligand>
</feature>
<feature type="binding site" evidence="1">
    <location>
        <position position="139"/>
    </location>
    <ligand>
        <name>Mg(2+)</name>
        <dbReference type="ChEBI" id="CHEBI:18420"/>
    </ligand>
</feature>
<feature type="binding site" evidence="1">
    <location>
        <begin position="146"/>
        <end position="148"/>
    </location>
    <ligand>
        <name>CTP</name>
        <dbReference type="ChEBI" id="CHEBI:37563"/>
        <note>allosteric inhibitor</note>
    </ligand>
</feature>
<feature type="binding site" evidence="1">
    <location>
        <begin position="186"/>
        <end position="191"/>
    </location>
    <ligand>
        <name>CTP</name>
        <dbReference type="ChEBI" id="CHEBI:37563"/>
        <note>allosteric inhibitor</note>
    </ligand>
</feature>
<feature type="binding site" evidence="1">
    <location>
        <begin position="186"/>
        <end position="191"/>
    </location>
    <ligand>
        <name>UTP</name>
        <dbReference type="ChEBI" id="CHEBI:46398"/>
    </ligand>
</feature>
<feature type="binding site" evidence="1">
    <location>
        <position position="222"/>
    </location>
    <ligand>
        <name>CTP</name>
        <dbReference type="ChEBI" id="CHEBI:37563"/>
        <note>allosteric inhibitor</note>
    </ligand>
</feature>
<feature type="binding site" evidence="1">
    <location>
        <position position="222"/>
    </location>
    <ligand>
        <name>UTP</name>
        <dbReference type="ChEBI" id="CHEBI:46398"/>
    </ligand>
</feature>
<feature type="binding site" evidence="1">
    <location>
        <position position="353"/>
    </location>
    <ligand>
        <name>L-glutamine</name>
        <dbReference type="ChEBI" id="CHEBI:58359"/>
    </ligand>
</feature>
<feature type="binding site" evidence="1">
    <location>
        <begin position="381"/>
        <end position="384"/>
    </location>
    <ligand>
        <name>L-glutamine</name>
        <dbReference type="ChEBI" id="CHEBI:58359"/>
    </ligand>
</feature>
<feature type="binding site" evidence="1">
    <location>
        <position position="404"/>
    </location>
    <ligand>
        <name>L-glutamine</name>
        <dbReference type="ChEBI" id="CHEBI:58359"/>
    </ligand>
</feature>
<feature type="binding site" evidence="1">
    <location>
        <position position="469"/>
    </location>
    <ligand>
        <name>L-glutamine</name>
        <dbReference type="ChEBI" id="CHEBI:58359"/>
    </ligand>
</feature>